<feature type="chain" id="PRO_0000261762" description="Large ribosomal subunit protein uL13">
    <location>
        <begin position="1"/>
        <end position="142"/>
    </location>
</feature>
<name>RL13_SYNC1</name>
<keyword id="KW-1185">Reference proteome</keyword>
<keyword id="KW-0687">Ribonucleoprotein</keyword>
<keyword id="KW-0689">Ribosomal protein</keyword>
<reference key="1">
    <citation type="submission" date="2005-10" db="EMBL/GenBank/DDBJ databases">
        <title>Complete sequence of Pelobacter carbinolicus DSM 2380.</title>
        <authorList>
            <person name="Copeland A."/>
            <person name="Lucas S."/>
            <person name="Lapidus A."/>
            <person name="Barry K."/>
            <person name="Detter J.C."/>
            <person name="Glavina T."/>
            <person name="Hammon N."/>
            <person name="Israni S."/>
            <person name="Pitluck S."/>
            <person name="Chertkov O."/>
            <person name="Schmutz J."/>
            <person name="Larimer F."/>
            <person name="Land M."/>
            <person name="Kyrpides N."/>
            <person name="Ivanova N."/>
            <person name="Richardson P."/>
        </authorList>
    </citation>
    <scope>NUCLEOTIDE SEQUENCE [LARGE SCALE GENOMIC DNA]</scope>
    <source>
        <strain>DSM 2380 / NBRC 103641 / GraBd1</strain>
    </source>
</reference>
<organism>
    <name type="scientific">Syntrophotalea carbinolica (strain DSM 2380 / NBRC 103641 / GraBd1)</name>
    <name type="common">Pelobacter carbinolicus</name>
    <dbReference type="NCBI Taxonomy" id="338963"/>
    <lineage>
        <taxon>Bacteria</taxon>
        <taxon>Pseudomonadati</taxon>
        <taxon>Thermodesulfobacteriota</taxon>
        <taxon>Desulfuromonadia</taxon>
        <taxon>Desulfuromonadales</taxon>
        <taxon>Syntrophotaleaceae</taxon>
        <taxon>Syntrophotalea</taxon>
    </lineage>
</organism>
<proteinExistence type="inferred from homology"/>
<evidence type="ECO:0000255" key="1">
    <source>
        <dbReference type="HAMAP-Rule" id="MF_01366"/>
    </source>
</evidence>
<evidence type="ECO:0000305" key="2"/>
<protein>
    <recommendedName>
        <fullName evidence="1">Large ribosomal subunit protein uL13</fullName>
    </recommendedName>
    <alternativeName>
        <fullName evidence="2">50S ribosomal protein L13</fullName>
    </alternativeName>
</protein>
<accession>Q3A3B6</accession>
<sequence>MSTQVAKKSEVKKNWYIVDLDGKVLGRAATEIARVLRGKHKAIYSPSVDTGDFVVVVNAEKVKLTGNKMSAKMYYRHSGYPGGLRQANAAQMLEKKPEDLIKKAVKGMLPKNKLGRDMFRKLKVYTGSDHPHAAQQPLELNI</sequence>
<dbReference type="EMBL" id="CP000142">
    <property type="protein sequence ID" value="ABA89141.1"/>
    <property type="molecule type" value="Genomic_DNA"/>
</dbReference>
<dbReference type="RefSeq" id="WP_011341645.1">
    <property type="nucleotide sequence ID" value="NC_007498.2"/>
</dbReference>
<dbReference type="SMR" id="Q3A3B6"/>
<dbReference type="STRING" id="338963.Pcar_1900"/>
<dbReference type="KEGG" id="pca:Pcar_1900"/>
<dbReference type="eggNOG" id="COG0102">
    <property type="taxonomic scope" value="Bacteria"/>
</dbReference>
<dbReference type="HOGENOM" id="CLU_082184_2_2_7"/>
<dbReference type="OrthoDB" id="9801330at2"/>
<dbReference type="Proteomes" id="UP000002534">
    <property type="component" value="Chromosome"/>
</dbReference>
<dbReference type="GO" id="GO:0022625">
    <property type="term" value="C:cytosolic large ribosomal subunit"/>
    <property type="evidence" value="ECO:0007669"/>
    <property type="project" value="TreeGrafter"/>
</dbReference>
<dbReference type="GO" id="GO:0003729">
    <property type="term" value="F:mRNA binding"/>
    <property type="evidence" value="ECO:0007669"/>
    <property type="project" value="TreeGrafter"/>
</dbReference>
<dbReference type="GO" id="GO:0003735">
    <property type="term" value="F:structural constituent of ribosome"/>
    <property type="evidence" value="ECO:0007669"/>
    <property type="project" value="InterPro"/>
</dbReference>
<dbReference type="GO" id="GO:0017148">
    <property type="term" value="P:negative regulation of translation"/>
    <property type="evidence" value="ECO:0007669"/>
    <property type="project" value="TreeGrafter"/>
</dbReference>
<dbReference type="GO" id="GO:0006412">
    <property type="term" value="P:translation"/>
    <property type="evidence" value="ECO:0007669"/>
    <property type="project" value="UniProtKB-UniRule"/>
</dbReference>
<dbReference type="CDD" id="cd00392">
    <property type="entry name" value="Ribosomal_L13"/>
    <property type="match status" value="1"/>
</dbReference>
<dbReference type="FunFam" id="3.90.1180.10:FF:000001">
    <property type="entry name" value="50S ribosomal protein L13"/>
    <property type="match status" value="1"/>
</dbReference>
<dbReference type="Gene3D" id="3.90.1180.10">
    <property type="entry name" value="Ribosomal protein L13"/>
    <property type="match status" value="1"/>
</dbReference>
<dbReference type="HAMAP" id="MF_01366">
    <property type="entry name" value="Ribosomal_uL13"/>
    <property type="match status" value="1"/>
</dbReference>
<dbReference type="InterPro" id="IPR005822">
    <property type="entry name" value="Ribosomal_uL13"/>
</dbReference>
<dbReference type="InterPro" id="IPR005823">
    <property type="entry name" value="Ribosomal_uL13_bac-type"/>
</dbReference>
<dbReference type="InterPro" id="IPR023563">
    <property type="entry name" value="Ribosomal_uL13_CS"/>
</dbReference>
<dbReference type="InterPro" id="IPR036899">
    <property type="entry name" value="Ribosomal_uL13_sf"/>
</dbReference>
<dbReference type="NCBIfam" id="TIGR01066">
    <property type="entry name" value="rplM_bact"/>
    <property type="match status" value="1"/>
</dbReference>
<dbReference type="PANTHER" id="PTHR11545:SF2">
    <property type="entry name" value="LARGE RIBOSOMAL SUBUNIT PROTEIN UL13M"/>
    <property type="match status" value="1"/>
</dbReference>
<dbReference type="PANTHER" id="PTHR11545">
    <property type="entry name" value="RIBOSOMAL PROTEIN L13"/>
    <property type="match status" value="1"/>
</dbReference>
<dbReference type="Pfam" id="PF00572">
    <property type="entry name" value="Ribosomal_L13"/>
    <property type="match status" value="1"/>
</dbReference>
<dbReference type="PIRSF" id="PIRSF002181">
    <property type="entry name" value="Ribosomal_L13"/>
    <property type="match status" value="1"/>
</dbReference>
<dbReference type="SUPFAM" id="SSF52161">
    <property type="entry name" value="Ribosomal protein L13"/>
    <property type="match status" value="1"/>
</dbReference>
<dbReference type="PROSITE" id="PS00783">
    <property type="entry name" value="RIBOSOMAL_L13"/>
    <property type="match status" value="1"/>
</dbReference>
<comment type="function">
    <text evidence="1">This protein is one of the early assembly proteins of the 50S ribosomal subunit, although it is not seen to bind rRNA by itself. It is important during the early stages of 50S assembly.</text>
</comment>
<comment type="subunit">
    <text evidence="1">Part of the 50S ribosomal subunit.</text>
</comment>
<comment type="similarity">
    <text evidence="1">Belongs to the universal ribosomal protein uL13 family.</text>
</comment>
<gene>
    <name evidence="1" type="primary">rplM</name>
    <name type="ordered locus">Pcar_1900</name>
</gene>